<reference key="1">
    <citation type="journal article" date="2004" name="Genome Res.">
        <title>The status, quality, and expansion of the NIH full-length cDNA project: the Mammalian Gene Collection (MGC).</title>
        <authorList>
            <consortium name="The MGC Project Team"/>
        </authorList>
    </citation>
    <scope>NUCLEOTIDE SEQUENCE [LARGE SCALE MRNA]</scope>
    <source>
        <tissue>Mammary gland</tissue>
    </source>
</reference>
<reference key="2">
    <citation type="journal article" date="2005" name="J. Biol. Chem.">
        <title>Feedback regulation of murine pantothenate kinase 3 by coenzyme A and coenzyme A thioesters.</title>
        <authorList>
            <person name="Zhang Y.M."/>
            <person name="Rock C.O."/>
            <person name="Jackowski S."/>
        </authorList>
    </citation>
    <scope>FUNCTION</scope>
    <scope>CATALYTIC ACTIVITY</scope>
    <scope>ACTIVITY REGULATION</scope>
    <scope>SUBUNIT</scope>
    <scope>SUBCELLULAR LOCATION</scope>
    <scope>TISSUE SPECIFICITY</scope>
    <scope>BIOPHYSICOCHEMICAL PROPERTIES</scope>
</reference>
<reference key="3">
    <citation type="journal article" date="2007" name="Chem. Biol.">
        <title>Chemical knockout of pantothenate kinase reveals the metabolic and genetic program responsible for hepatic coenzyme A homeostasis.</title>
        <authorList>
            <person name="Zhang Y.M."/>
            <person name="Chohnan S."/>
            <person name="Virga K.G."/>
            <person name="Stevens R.D."/>
            <person name="Ilkayeva O.R."/>
            <person name="Wenner B.R."/>
            <person name="Bain J.R."/>
            <person name="Newgard C.B."/>
            <person name="Lee R.E."/>
            <person name="Rock C.O."/>
            <person name="Jackowski S."/>
        </authorList>
    </citation>
    <scope>FUNCTION</scope>
    <scope>CATALYTIC ACTIVITY</scope>
    <scope>ACTIVITY REGULATION</scope>
    <scope>SUBUNIT</scope>
</reference>
<reference key="4">
    <citation type="journal article" date="2012" name="PLoS ONE">
        <title>Compartmentalization of mammalian pantothenate kinases.</title>
        <authorList>
            <person name="Alfonso-Pecchio A."/>
            <person name="Garcia M."/>
            <person name="Leonardi R."/>
            <person name="Jackowski S."/>
        </authorList>
    </citation>
    <scope>SUBCELLULAR LOCATION</scope>
</reference>
<accession>Q8R2W9</accession>
<feature type="chain" id="PRO_0000161805" description="Pantothenate kinase 3">
    <location>
        <begin position="1"/>
        <end position="370"/>
    </location>
</feature>
<feature type="active site" description="Proton acceptor" evidence="1">
    <location>
        <position position="138"/>
    </location>
</feature>
<feature type="binding site" evidence="1">
    <location>
        <position position="192"/>
    </location>
    <ligand>
        <name>acetyl-CoA</name>
        <dbReference type="ChEBI" id="CHEBI:57288"/>
    </ligand>
</feature>
<feature type="binding site" evidence="1">
    <location>
        <position position="195"/>
    </location>
    <ligand>
        <name>acetyl-CoA</name>
        <dbReference type="ChEBI" id="CHEBI:57288"/>
    </ligand>
</feature>
<feature type="binding site" evidence="1">
    <location>
        <position position="207"/>
    </location>
    <ligand>
        <name>acetyl-CoA</name>
        <dbReference type="ChEBI" id="CHEBI:57288"/>
    </ligand>
</feature>
<sequence>MKIKDAKKPSFPWFGMDIGGTLVKLSYFEPIDITAEEEQEEVESLKSIRKYLTSNVAYGSTGIRDVHLELKDLTLFGRRGNLHFIRFPTQDLPTFIQMGRDKNFSTLQTVLSATGGGAYKFEKDFRTIGNLHLHKLDELDCLVKGLLYIDSVSFNGQAECYYFANASEPERCQKMPFNLDDPYPLLVVNIGSGVSILAVHSKDNYKRVTGTSLGGGTFLGLCSLLTGCESFEEALEMASKGDSTQADRLVRDIYGGDYERFGLPGWAVASSFGNMIYKEKRETVSKEDLARATLVTITNNIGSVARMCAVNEKINRVVFVGNFLRVNTLSMKLLAYALDYWSKGQLKALFLEHEGYFGAVGALLGLPNFS</sequence>
<dbReference type="EC" id="2.7.1.33" evidence="2 3"/>
<dbReference type="EMBL" id="BC027089">
    <property type="protein sequence ID" value="AAH27089.1"/>
    <property type="molecule type" value="mRNA"/>
</dbReference>
<dbReference type="EMBL" id="BC032188">
    <property type="status" value="NOT_ANNOTATED_CDS"/>
    <property type="molecule type" value="mRNA"/>
</dbReference>
<dbReference type="CCDS" id="CCDS24543.1"/>
<dbReference type="RefSeq" id="NP_666074.1">
    <property type="nucleotide sequence ID" value="NM_145962.2"/>
</dbReference>
<dbReference type="SMR" id="Q8R2W9"/>
<dbReference type="BioGRID" id="229225">
    <property type="interactions" value="1"/>
</dbReference>
<dbReference type="FunCoup" id="Q8R2W9">
    <property type="interactions" value="4458"/>
</dbReference>
<dbReference type="IntAct" id="Q8R2W9">
    <property type="interactions" value="1"/>
</dbReference>
<dbReference type="MINT" id="Q8R2W9"/>
<dbReference type="STRING" id="10090.ENSMUSP00000018990"/>
<dbReference type="iPTMnet" id="Q8R2W9"/>
<dbReference type="PhosphoSitePlus" id="Q8R2W9"/>
<dbReference type="PaxDb" id="10090-ENSMUSP00000018990"/>
<dbReference type="ProteomicsDB" id="294379"/>
<dbReference type="Pumba" id="Q8R2W9"/>
<dbReference type="Antibodypedia" id="16804">
    <property type="antibodies" value="230 antibodies from 23 providers"/>
</dbReference>
<dbReference type="DNASU" id="211347"/>
<dbReference type="Ensembl" id="ENSMUST00000018990.8">
    <property type="protein sequence ID" value="ENSMUSP00000018990.8"/>
    <property type="gene ID" value="ENSMUSG00000018846.9"/>
</dbReference>
<dbReference type="GeneID" id="211347"/>
<dbReference type="KEGG" id="mmu:211347"/>
<dbReference type="UCSC" id="uc007ilf.1">
    <property type="organism name" value="mouse"/>
</dbReference>
<dbReference type="AGR" id="MGI:2387464"/>
<dbReference type="CTD" id="79646"/>
<dbReference type="MGI" id="MGI:2387464">
    <property type="gene designation" value="Pank3"/>
</dbReference>
<dbReference type="VEuPathDB" id="HostDB:ENSMUSG00000018846"/>
<dbReference type="eggNOG" id="KOG2201">
    <property type="taxonomic scope" value="Eukaryota"/>
</dbReference>
<dbReference type="GeneTree" id="ENSGT00940000156396"/>
<dbReference type="HOGENOM" id="CLU_011154_0_1_1"/>
<dbReference type="InParanoid" id="Q8R2W9"/>
<dbReference type="OMA" id="FKNPDIC"/>
<dbReference type="OrthoDB" id="275583at2759"/>
<dbReference type="PhylomeDB" id="Q8R2W9"/>
<dbReference type="TreeFam" id="TF314866"/>
<dbReference type="BRENDA" id="2.7.1.33">
    <property type="organism ID" value="3474"/>
</dbReference>
<dbReference type="Reactome" id="R-MMU-196783">
    <property type="pathway name" value="Coenzyme A biosynthesis"/>
</dbReference>
<dbReference type="SABIO-RK" id="Q8R2W9"/>
<dbReference type="UniPathway" id="UPA00241">
    <property type="reaction ID" value="UER00352"/>
</dbReference>
<dbReference type="BioGRID-ORCS" id="211347">
    <property type="hits" value="1 hit in 77 CRISPR screens"/>
</dbReference>
<dbReference type="ChiTaRS" id="Pank3">
    <property type="organism name" value="mouse"/>
</dbReference>
<dbReference type="PRO" id="PR:Q8R2W9"/>
<dbReference type="Proteomes" id="UP000000589">
    <property type="component" value="Chromosome 11"/>
</dbReference>
<dbReference type="RNAct" id="Q8R2W9">
    <property type="molecule type" value="protein"/>
</dbReference>
<dbReference type="Bgee" id="ENSMUSG00000018846">
    <property type="expression patterns" value="Expressed in mammary gland and 256 other cell types or tissues"/>
</dbReference>
<dbReference type="ExpressionAtlas" id="Q8R2W9">
    <property type="expression patterns" value="baseline and differential"/>
</dbReference>
<dbReference type="GO" id="GO:0005737">
    <property type="term" value="C:cytoplasm"/>
    <property type="evidence" value="ECO:0000314"/>
    <property type="project" value="MGI"/>
</dbReference>
<dbReference type="GO" id="GO:0005829">
    <property type="term" value="C:cytosol"/>
    <property type="evidence" value="ECO:0000250"/>
    <property type="project" value="UniProtKB"/>
</dbReference>
<dbReference type="GO" id="GO:1905502">
    <property type="term" value="F:acetyl-CoA binding"/>
    <property type="evidence" value="ECO:0000250"/>
    <property type="project" value="UniProtKB"/>
</dbReference>
<dbReference type="GO" id="GO:0005524">
    <property type="term" value="F:ATP binding"/>
    <property type="evidence" value="ECO:0000250"/>
    <property type="project" value="UniProtKB"/>
</dbReference>
<dbReference type="GO" id="GO:0004594">
    <property type="term" value="F:pantothenate kinase activity"/>
    <property type="evidence" value="ECO:0000314"/>
    <property type="project" value="MGI"/>
</dbReference>
<dbReference type="GO" id="GO:0042803">
    <property type="term" value="F:protein homodimerization activity"/>
    <property type="evidence" value="ECO:0000250"/>
    <property type="project" value="UniProtKB"/>
</dbReference>
<dbReference type="GO" id="GO:0019842">
    <property type="term" value="F:vitamin binding"/>
    <property type="evidence" value="ECO:0000250"/>
    <property type="project" value="UniProtKB"/>
</dbReference>
<dbReference type="GO" id="GO:0015937">
    <property type="term" value="P:coenzyme A biosynthetic process"/>
    <property type="evidence" value="ECO:0000314"/>
    <property type="project" value="MGI"/>
</dbReference>
<dbReference type="FunFam" id="3.30.420.40:FF:000025">
    <property type="entry name" value="pantothenate kinase 2, mitochondrial"/>
    <property type="match status" value="1"/>
</dbReference>
<dbReference type="FunFam" id="3.30.420.510:FF:000001">
    <property type="entry name" value="pantothenate kinase 2, mitochondrial"/>
    <property type="match status" value="1"/>
</dbReference>
<dbReference type="Gene3D" id="3.30.420.40">
    <property type="match status" value="1"/>
</dbReference>
<dbReference type="Gene3D" id="3.30.420.510">
    <property type="match status" value="1"/>
</dbReference>
<dbReference type="InterPro" id="IPR043129">
    <property type="entry name" value="ATPase_NBD"/>
</dbReference>
<dbReference type="InterPro" id="IPR004567">
    <property type="entry name" value="Type_II_PanK"/>
</dbReference>
<dbReference type="NCBIfam" id="TIGR00555">
    <property type="entry name" value="panK_eukar"/>
    <property type="match status" value="1"/>
</dbReference>
<dbReference type="PANTHER" id="PTHR12280">
    <property type="entry name" value="PANTOTHENATE KINASE"/>
    <property type="match status" value="1"/>
</dbReference>
<dbReference type="PANTHER" id="PTHR12280:SF21">
    <property type="entry name" value="PANTOTHENATE KINASE 3"/>
    <property type="match status" value="1"/>
</dbReference>
<dbReference type="Pfam" id="PF03630">
    <property type="entry name" value="Fumble"/>
    <property type="match status" value="1"/>
</dbReference>
<dbReference type="SUPFAM" id="SSF53067">
    <property type="entry name" value="Actin-like ATPase domain"/>
    <property type="match status" value="2"/>
</dbReference>
<comment type="function">
    <text evidence="2 3">Catalyzes the phosphorylation of pantothenate to generate 4'-phosphopantothenate in the first and rate-determining step of coenzyme A (CoA) synthesis.</text>
</comment>
<comment type="catalytic activity">
    <reaction evidence="2 3">
        <text>(R)-pantothenate + ATP = (R)-4'-phosphopantothenate + ADP + H(+)</text>
        <dbReference type="Rhea" id="RHEA:16373"/>
        <dbReference type="ChEBI" id="CHEBI:10986"/>
        <dbReference type="ChEBI" id="CHEBI:15378"/>
        <dbReference type="ChEBI" id="CHEBI:29032"/>
        <dbReference type="ChEBI" id="CHEBI:30616"/>
        <dbReference type="ChEBI" id="CHEBI:456216"/>
        <dbReference type="EC" id="2.7.1.33"/>
    </reaction>
</comment>
<comment type="activity regulation">
    <text evidence="1 2 3">Subject to allosteric regulation, exists in two distinct conformational states, a catalytically incompetent (or open) conformation stabilized by the binding of acetyl(acyl)-CoA, and a catalytically competent (or closed) conformation stabilized by ATP-binding (By similarity). Acetyl-CoA and its thioesters act as allosteric inhibitors and compete with the ATP-binding site (By similarity). Strongly inhibited by acetyl-CoA, malonyl-CoA and palmitoyl CoA and modestly inhibited by CoA (PubMed:16040613). Inhibited by calcium hopantenate (PubMed:17379144).</text>
</comment>
<comment type="biophysicochemical properties">
    <kinetics>
        <KM evidence="2">9.5 uM for pantothenate</KM>
        <KM evidence="2">112 uM for ATP</KM>
    </kinetics>
</comment>
<comment type="pathway">
    <text evidence="2 3">Cofactor biosynthesis; coenzyme A biosynthesis; CoA from (R)-pantothenate: step 1/5.</text>
</comment>
<comment type="subunit">
    <text evidence="2 3">Homodimer.</text>
</comment>
<comment type="subcellular location">
    <subcellularLocation>
        <location evidence="2 4 5">Cytoplasm</location>
    </subcellularLocation>
</comment>
<comment type="tissue specificity">
    <text evidence="2">Highly expressed in the liver.</text>
</comment>
<comment type="similarity">
    <text evidence="5">Belongs to the type II pantothenate kinase family.</text>
</comment>
<organism>
    <name type="scientific">Mus musculus</name>
    <name type="common">Mouse</name>
    <dbReference type="NCBI Taxonomy" id="10090"/>
    <lineage>
        <taxon>Eukaryota</taxon>
        <taxon>Metazoa</taxon>
        <taxon>Chordata</taxon>
        <taxon>Craniata</taxon>
        <taxon>Vertebrata</taxon>
        <taxon>Euteleostomi</taxon>
        <taxon>Mammalia</taxon>
        <taxon>Eutheria</taxon>
        <taxon>Euarchontoglires</taxon>
        <taxon>Glires</taxon>
        <taxon>Rodentia</taxon>
        <taxon>Myomorpha</taxon>
        <taxon>Muroidea</taxon>
        <taxon>Muridae</taxon>
        <taxon>Murinae</taxon>
        <taxon>Mus</taxon>
        <taxon>Mus</taxon>
    </lineage>
</organism>
<gene>
    <name type="primary">Pank3</name>
</gene>
<evidence type="ECO:0000250" key="1">
    <source>
        <dbReference type="UniProtKB" id="Q9H999"/>
    </source>
</evidence>
<evidence type="ECO:0000269" key="2">
    <source>
    </source>
</evidence>
<evidence type="ECO:0000269" key="3">
    <source>
    </source>
</evidence>
<evidence type="ECO:0000269" key="4">
    <source>
    </source>
</evidence>
<evidence type="ECO:0000305" key="5"/>
<proteinExistence type="evidence at protein level"/>
<name>PANK3_MOUSE</name>
<protein>
    <recommendedName>
        <fullName>Pantothenate kinase 3</fullName>
        <shortName>mPanK3</shortName>
        <ecNumber evidence="2 3">2.7.1.33</ecNumber>
    </recommendedName>
    <alternativeName>
        <fullName>Pantothenic acid kinase 3</fullName>
    </alternativeName>
</protein>
<keyword id="KW-0067">ATP-binding</keyword>
<keyword id="KW-0173">Coenzyme A biosynthesis</keyword>
<keyword id="KW-0963">Cytoplasm</keyword>
<keyword id="KW-0418">Kinase</keyword>
<keyword id="KW-0547">Nucleotide-binding</keyword>
<keyword id="KW-1185">Reference proteome</keyword>
<keyword id="KW-0808">Transferase</keyword>